<sequence length="61" mass="7179">MARKAIIEKWSKTPKYKTRAYTRCRICGRPHAVLKKYGVCRICFRELAYKGEIPGCRKASW</sequence>
<keyword id="KW-0479">Metal-binding</keyword>
<keyword id="KW-0687">Ribonucleoprotein</keyword>
<keyword id="KW-0689">Ribosomal protein</keyword>
<keyword id="KW-0694">RNA-binding</keyword>
<keyword id="KW-0699">rRNA-binding</keyword>
<keyword id="KW-0862">Zinc</keyword>
<feature type="chain" id="PRO_1000087012" description="Small ribosomal subunit protein uS14">
    <location>
        <begin position="1"/>
        <end position="61"/>
    </location>
</feature>
<feature type="binding site" evidence="1">
    <location>
        <position position="24"/>
    </location>
    <ligand>
        <name>Zn(2+)</name>
        <dbReference type="ChEBI" id="CHEBI:29105"/>
    </ligand>
</feature>
<feature type="binding site" evidence="1">
    <location>
        <position position="27"/>
    </location>
    <ligand>
        <name>Zn(2+)</name>
        <dbReference type="ChEBI" id="CHEBI:29105"/>
    </ligand>
</feature>
<feature type="binding site" evidence="1">
    <location>
        <position position="40"/>
    </location>
    <ligand>
        <name>Zn(2+)</name>
        <dbReference type="ChEBI" id="CHEBI:29105"/>
    </ligand>
</feature>
<feature type="binding site" evidence="1">
    <location>
        <position position="43"/>
    </location>
    <ligand>
        <name>Zn(2+)</name>
        <dbReference type="ChEBI" id="CHEBI:29105"/>
    </ligand>
</feature>
<comment type="function">
    <text evidence="1">Binds 16S rRNA, required for the assembly of 30S particles and may also be responsible for determining the conformation of the 16S rRNA at the A site.</text>
</comment>
<comment type="cofactor">
    <cofactor evidence="1">
        <name>Zn(2+)</name>
        <dbReference type="ChEBI" id="CHEBI:29105"/>
    </cofactor>
    <text evidence="1">Binds 1 zinc ion per subunit.</text>
</comment>
<comment type="subunit">
    <text evidence="1">Part of the 30S ribosomal subunit. Contacts proteins S3 and S10.</text>
</comment>
<comment type="similarity">
    <text evidence="1">Belongs to the universal ribosomal protein uS14 family. Zinc-binding uS14 subfamily.</text>
</comment>
<evidence type="ECO:0000255" key="1">
    <source>
        <dbReference type="HAMAP-Rule" id="MF_01364"/>
    </source>
</evidence>
<evidence type="ECO:0000305" key="2"/>
<proteinExistence type="inferred from homology"/>
<gene>
    <name evidence="1" type="primary">rpsZ</name>
    <name evidence="1" type="synonym">rpsN</name>
    <name type="ordered locus">Cbei_0164</name>
</gene>
<accession>A6LPS4</accession>
<name>RS14Z_CLOB8</name>
<reference key="1">
    <citation type="submission" date="2007-06" db="EMBL/GenBank/DDBJ databases">
        <title>Complete sequence of Clostridium beijerinckii NCIMB 8052.</title>
        <authorList>
            <consortium name="US DOE Joint Genome Institute"/>
            <person name="Copeland A."/>
            <person name="Lucas S."/>
            <person name="Lapidus A."/>
            <person name="Barry K."/>
            <person name="Detter J.C."/>
            <person name="Glavina del Rio T."/>
            <person name="Hammon N."/>
            <person name="Israni S."/>
            <person name="Dalin E."/>
            <person name="Tice H."/>
            <person name="Pitluck S."/>
            <person name="Sims D."/>
            <person name="Brettin T."/>
            <person name="Bruce D."/>
            <person name="Tapia R."/>
            <person name="Brainard J."/>
            <person name="Schmutz J."/>
            <person name="Larimer F."/>
            <person name="Land M."/>
            <person name="Hauser L."/>
            <person name="Kyrpides N."/>
            <person name="Mikhailova N."/>
            <person name="Bennet G."/>
            <person name="Cann I."/>
            <person name="Chen J.-S."/>
            <person name="Contreras A.L."/>
            <person name="Jones D."/>
            <person name="Kashket E."/>
            <person name="Mitchell W."/>
            <person name="Stoddard S."/>
            <person name="Schwarz W."/>
            <person name="Qureshi N."/>
            <person name="Young M."/>
            <person name="Shi Z."/>
            <person name="Ezeji T."/>
            <person name="White B."/>
            <person name="Blaschek H."/>
            <person name="Richardson P."/>
        </authorList>
    </citation>
    <scope>NUCLEOTIDE SEQUENCE [LARGE SCALE GENOMIC DNA]</scope>
    <source>
        <strain>ATCC 51743 / NCIMB 8052</strain>
    </source>
</reference>
<organism>
    <name type="scientific">Clostridium beijerinckii (strain ATCC 51743 / NCIMB 8052)</name>
    <name type="common">Clostridium acetobutylicum</name>
    <dbReference type="NCBI Taxonomy" id="290402"/>
    <lineage>
        <taxon>Bacteria</taxon>
        <taxon>Bacillati</taxon>
        <taxon>Bacillota</taxon>
        <taxon>Clostridia</taxon>
        <taxon>Eubacteriales</taxon>
        <taxon>Clostridiaceae</taxon>
        <taxon>Clostridium</taxon>
    </lineage>
</organism>
<protein>
    <recommendedName>
        <fullName evidence="1">Small ribosomal subunit protein uS14</fullName>
    </recommendedName>
    <alternativeName>
        <fullName evidence="2">30S ribosomal protein S14 type Z</fullName>
    </alternativeName>
</protein>
<dbReference type="EMBL" id="CP000721">
    <property type="protein sequence ID" value="ABR32354.1"/>
    <property type="molecule type" value="Genomic_DNA"/>
</dbReference>
<dbReference type="RefSeq" id="WP_009167825.1">
    <property type="nucleotide sequence ID" value="NC_009617.1"/>
</dbReference>
<dbReference type="SMR" id="A6LPS4"/>
<dbReference type="KEGG" id="cbe:Cbei_0164"/>
<dbReference type="eggNOG" id="COG0199">
    <property type="taxonomic scope" value="Bacteria"/>
</dbReference>
<dbReference type="HOGENOM" id="CLU_139869_3_0_9"/>
<dbReference type="Proteomes" id="UP000000565">
    <property type="component" value="Chromosome"/>
</dbReference>
<dbReference type="GO" id="GO:0005737">
    <property type="term" value="C:cytoplasm"/>
    <property type="evidence" value="ECO:0007669"/>
    <property type="project" value="UniProtKB-ARBA"/>
</dbReference>
<dbReference type="GO" id="GO:0015935">
    <property type="term" value="C:small ribosomal subunit"/>
    <property type="evidence" value="ECO:0007669"/>
    <property type="project" value="TreeGrafter"/>
</dbReference>
<dbReference type="GO" id="GO:0019843">
    <property type="term" value="F:rRNA binding"/>
    <property type="evidence" value="ECO:0007669"/>
    <property type="project" value="UniProtKB-UniRule"/>
</dbReference>
<dbReference type="GO" id="GO:0003735">
    <property type="term" value="F:structural constituent of ribosome"/>
    <property type="evidence" value="ECO:0007669"/>
    <property type="project" value="InterPro"/>
</dbReference>
<dbReference type="GO" id="GO:0008270">
    <property type="term" value="F:zinc ion binding"/>
    <property type="evidence" value="ECO:0007669"/>
    <property type="project" value="UniProtKB-UniRule"/>
</dbReference>
<dbReference type="GO" id="GO:0006412">
    <property type="term" value="P:translation"/>
    <property type="evidence" value="ECO:0007669"/>
    <property type="project" value="UniProtKB-UniRule"/>
</dbReference>
<dbReference type="FunFam" id="4.10.830.10:FF:000001">
    <property type="entry name" value="30S ribosomal protein S14 type Z"/>
    <property type="match status" value="1"/>
</dbReference>
<dbReference type="Gene3D" id="4.10.830.10">
    <property type="entry name" value="30s Ribosomal Protein S14, Chain N"/>
    <property type="match status" value="1"/>
</dbReference>
<dbReference type="HAMAP" id="MF_01364_B">
    <property type="entry name" value="Ribosomal_uS14_2_B"/>
    <property type="match status" value="1"/>
</dbReference>
<dbReference type="InterPro" id="IPR001209">
    <property type="entry name" value="Ribosomal_uS14"/>
</dbReference>
<dbReference type="InterPro" id="IPR023053">
    <property type="entry name" value="Ribosomal_uS14_bact"/>
</dbReference>
<dbReference type="InterPro" id="IPR043140">
    <property type="entry name" value="Ribosomal_uS14_sf"/>
</dbReference>
<dbReference type="NCBIfam" id="NF005974">
    <property type="entry name" value="PRK08061.1"/>
    <property type="match status" value="1"/>
</dbReference>
<dbReference type="PANTHER" id="PTHR19836">
    <property type="entry name" value="30S RIBOSOMAL PROTEIN S14"/>
    <property type="match status" value="1"/>
</dbReference>
<dbReference type="PANTHER" id="PTHR19836:SF19">
    <property type="entry name" value="SMALL RIBOSOMAL SUBUNIT PROTEIN US14M"/>
    <property type="match status" value="1"/>
</dbReference>
<dbReference type="Pfam" id="PF00253">
    <property type="entry name" value="Ribosomal_S14"/>
    <property type="match status" value="1"/>
</dbReference>
<dbReference type="SUPFAM" id="SSF57716">
    <property type="entry name" value="Glucocorticoid receptor-like (DNA-binding domain)"/>
    <property type="match status" value="1"/>
</dbReference>